<gene>
    <name evidence="1" type="primary">dapF</name>
    <name type="ordered locus">SPAB_04899</name>
</gene>
<sequence length="274" mass="30337">MQFSKMHGLGNDFMVVDAVTQNVFFSPELIRRLSDRHLGVGFDQLLVVEPPYDPELDFHYRIFNADGSEVSQCGNGARCFARFVRLKGLTNKRDIRVSTANGRMVLSVTEDELVRVNMGEPNFEPAQVPFRANKAEKTYIMRAAEQTILCGVVSMGNPHCVIQVDNVDTAAVETLGPVLESHERFPERANIGFMQVVRREHIRLRVYERGAGETRACGSGACAAVAVGIQQGLLAEEVRVELPGGRLDIAWKGPGHPLYMTGPAAHIYDGFIHL</sequence>
<organism>
    <name type="scientific">Salmonella paratyphi B (strain ATCC BAA-1250 / SPB7)</name>
    <dbReference type="NCBI Taxonomy" id="1016998"/>
    <lineage>
        <taxon>Bacteria</taxon>
        <taxon>Pseudomonadati</taxon>
        <taxon>Pseudomonadota</taxon>
        <taxon>Gammaproteobacteria</taxon>
        <taxon>Enterobacterales</taxon>
        <taxon>Enterobacteriaceae</taxon>
        <taxon>Salmonella</taxon>
    </lineage>
</organism>
<comment type="function">
    <text evidence="1">Catalyzes the stereoinversion of LL-2,6-diaminopimelate (L,L-DAP) to meso-diaminopimelate (meso-DAP), a precursor of L-lysine and an essential component of the bacterial peptidoglycan.</text>
</comment>
<comment type="catalytic activity">
    <reaction evidence="1">
        <text>(2S,6S)-2,6-diaminopimelate = meso-2,6-diaminopimelate</text>
        <dbReference type="Rhea" id="RHEA:15393"/>
        <dbReference type="ChEBI" id="CHEBI:57609"/>
        <dbReference type="ChEBI" id="CHEBI:57791"/>
        <dbReference type="EC" id="5.1.1.7"/>
    </reaction>
</comment>
<comment type="pathway">
    <text evidence="1">Amino-acid biosynthesis; L-lysine biosynthesis via DAP pathway; DL-2,6-diaminopimelate from LL-2,6-diaminopimelate: step 1/1.</text>
</comment>
<comment type="subunit">
    <text evidence="1">Homodimer.</text>
</comment>
<comment type="subcellular location">
    <subcellularLocation>
        <location evidence="1">Cytoplasm</location>
    </subcellularLocation>
</comment>
<comment type="similarity">
    <text evidence="1">Belongs to the diaminopimelate epimerase family.</text>
</comment>
<dbReference type="EC" id="5.1.1.7" evidence="1"/>
<dbReference type="EMBL" id="CP000886">
    <property type="protein sequence ID" value="ABX70198.1"/>
    <property type="molecule type" value="Genomic_DNA"/>
</dbReference>
<dbReference type="RefSeq" id="WP_001160671.1">
    <property type="nucleotide sequence ID" value="NC_010102.1"/>
</dbReference>
<dbReference type="SMR" id="A9MY70"/>
<dbReference type="KEGG" id="spq:SPAB_04899"/>
<dbReference type="PATRIC" id="fig|1016998.12.peg.4600"/>
<dbReference type="HOGENOM" id="CLU_053306_1_1_6"/>
<dbReference type="BioCyc" id="SENT1016998:SPAB_RS19915-MONOMER"/>
<dbReference type="UniPathway" id="UPA00034">
    <property type="reaction ID" value="UER00025"/>
</dbReference>
<dbReference type="Proteomes" id="UP000008556">
    <property type="component" value="Chromosome"/>
</dbReference>
<dbReference type="GO" id="GO:0005829">
    <property type="term" value="C:cytosol"/>
    <property type="evidence" value="ECO:0007669"/>
    <property type="project" value="TreeGrafter"/>
</dbReference>
<dbReference type="GO" id="GO:0008837">
    <property type="term" value="F:diaminopimelate epimerase activity"/>
    <property type="evidence" value="ECO:0007669"/>
    <property type="project" value="UniProtKB-UniRule"/>
</dbReference>
<dbReference type="GO" id="GO:0009089">
    <property type="term" value="P:lysine biosynthetic process via diaminopimelate"/>
    <property type="evidence" value="ECO:0007669"/>
    <property type="project" value="UniProtKB-UniRule"/>
</dbReference>
<dbReference type="FunFam" id="3.10.310.10:FF:000001">
    <property type="entry name" value="Diaminopimelate epimerase"/>
    <property type="match status" value="1"/>
</dbReference>
<dbReference type="FunFam" id="3.10.310.10:FF:000002">
    <property type="entry name" value="Diaminopimelate epimerase"/>
    <property type="match status" value="1"/>
</dbReference>
<dbReference type="Gene3D" id="3.10.310.10">
    <property type="entry name" value="Diaminopimelate Epimerase, Chain A, domain 1"/>
    <property type="match status" value="2"/>
</dbReference>
<dbReference type="HAMAP" id="MF_00197">
    <property type="entry name" value="DAP_epimerase"/>
    <property type="match status" value="1"/>
</dbReference>
<dbReference type="InterPro" id="IPR018510">
    <property type="entry name" value="DAP_epimerase_AS"/>
</dbReference>
<dbReference type="InterPro" id="IPR001653">
    <property type="entry name" value="DAP_epimerase_DapF"/>
</dbReference>
<dbReference type="NCBIfam" id="TIGR00652">
    <property type="entry name" value="DapF"/>
    <property type="match status" value="1"/>
</dbReference>
<dbReference type="PANTHER" id="PTHR31689:SF0">
    <property type="entry name" value="DIAMINOPIMELATE EPIMERASE"/>
    <property type="match status" value="1"/>
</dbReference>
<dbReference type="PANTHER" id="PTHR31689">
    <property type="entry name" value="DIAMINOPIMELATE EPIMERASE, CHLOROPLASTIC"/>
    <property type="match status" value="1"/>
</dbReference>
<dbReference type="Pfam" id="PF01678">
    <property type="entry name" value="DAP_epimerase"/>
    <property type="match status" value="2"/>
</dbReference>
<dbReference type="SUPFAM" id="SSF54506">
    <property type="entry name" value="Diaminopimelate epimerase-like"/>
    <property type="match status" value="1"/>
</dbReference>
<dbReference type="PROSITE" id="PS01326">
    <property type="entry name" value="DAP_EPIMERASE"/>
    <property type="match status" value="1"/>
</dbReference>
<reference key="1">
    <citation type="submission" date="2007-11" db="EMBL/GenBank/DDBJ databases">
        <authorList>
            <consortium name="The Salmonella enterica serovar Paratyphi B Genome Sequencing Project"/>
            <person name="McClelland M."/>
            <person name="Sanderson E.K."/>
            <person name="Porwollik S."/>
            <person name="Spieth J."/>
            <person name="Clifton W.S."/>
            <person name="Fulton R."/>
            <person name="Cordes M."/>
            <person name="Wollam A."/>
            <person name="Shah N."/>
            <person name="Pepin K."/>
            <person name="Bhonagiri V."/>
            <person name="Nash W."/>
            <person name="Johnson M."/>
            <person name="Thiruvilangam P."/>
            <person name="Wilson R."/>
        </authorList>
    </citation>
    <scope>NUCLEOTIDE SEQUENCE [LARGE SCALE GENOMIC DNA]</scope>
    <source>
        <strain>ATCC BAA-1250 / SPB7</strain>
    </source>
</reference>
<keyword id="KW-0028">Amino-acid biosynthesis</keyword>
<keyword id="KW-0963">Cytoplasm</keyword>
<keyword id="KW-0413">Isomerase</keyword>
<keyword id="KW-0457">Lysine biosynthesis</keyword>
<feature type="chain" id="PRO_1000077704" description="Diaminopimelate epimerase">
    <location>
        <begin position="1"/>
        <end position="274"/>
    </location>
</feature>
<feature type="active site" description="Proton donor" evidence="1">
    <location>
        <position position="73"/>
    </location>
</feature>
<feature type="active site" description="Proton acceptor" evidence="1">
    <location>
        <position position="217"/>
    </location>
</feature>
<feature type="binding site" evidence="1">
    <location>
        <position position="11"/>
    </location>
    <ligand>
        <name>substrate</name>
    </ligand>
</feature>
<feature type="binding site" evidence="1">
    <location>
        <position position="44"/>
    </location>
    <ligand>
        <name>substrate</name>
    </ligand>
</feature>
<feature type="binding site" evidence="1">
    <location>
        <position position="64"/>
    </location>
    <ligand>
        <name>substrate</name>
    </ligand>
</feature>
<feature type="binding site" evidence="1">
    <location>
        <begin position="74"/>
        <end position="75"/>
    </location>
    <ligand>
        <name>substrate</name>
    </ligand>
</feature>
<feature type="binding site" evidence="1">
    <location>
        <position position="157"/>
    </location>
    <ligand>
        <name>substrate</name>
    </ligand>
</feature>
<feature type="binding site" evidence="1">
    <location>
        <position position="190"/>
    </location>
    <ligand>
        <name>substrate</name>
    </ligand>
</feature>
<feature type="binding site" evidence="1">
    <location>
        <begin position="208"/>
        <end position="209"/>
    </location>
    <ligand>
        <name>substrate</name>
    </ligand>
</feature>
<feature type="binding site" evidence="1">
    <location>
        <begin position="218"/>
        <end position="219"/>
    </location>
    <ligand>
        <name>substrate</name>
    </ligand>
</feature>
<feature type="site" description="Could be important to modulate the pK values of the two catalytic cysteine residues" evidence="1">
    <location>
        <position position="159"/>
    </location>
</feature>
<feature type="site" description="Could be important to modulate the pK values of the two catalytic cysteine residues" evidence="1">
    <location>
        <position position="208"/>
    </location>
</feature>
<feature type="site" description="Important for dimerization" evidence="1">
    <location>
        <position position="268"/>
    </location>
</feature>
<accession>A9MY70</accession>
<name>DAPF_SALPB</name>
<evidence type="ECO:0000255" key="1">
    <source>
        <dbReference type="HAMAP-Rule" id="MF_00197"/>
    </source>
</evidence>
<proteinExistence type="inferred from homology"/>
<protein>
    <recommendedName>
        <fullName evidence="1">Diaminopimelate epimerase</fullName>
        <shortName evidence="1">DAP epimerase</shortName>
        <ecNumber evidence="1">5.1.1.7</ecNumber>
    </recommendedName>
    <alternativeName>
        <fullName evidence="1">PLP-independent amino acid racemase</fullName>
    </alternativeName>
</protein>